<protein>
    <recommendedName>
        <fullName>Xaa-Pro dipeptidyl-peptidase</fullName>
        <ecNumber>3.4.14.11</ecNumber>
    </recommendedName>
    <alternativeName>
        <fullName>X-Pro dipeptidyl-peptidase</fullName>
    </alternativeName>
    <alternativeName>
        <fullName>X-prolyl-dipeptidyl aminopeptidase</fullName>
        <shortName>X-PDAP</shortName>
    </alternativeName>
</protein>
<evidence type="ECO:0000250" key="1"/>
<evidence type="ECO:0000305" key="2"/>
<reference key="1">
    <citation type="submission" date="2001-07" db="EMBL/GenBank/DDBJ databases">
        <title>An X-prolyl dipeptidyl aminopeptidase from Lactococcus lactis: cloning, expression in Escherichia coli and removal of N-terminal Pro-Pro from recombinant proteins.</title>
        <authorList>
            <person name="Ming X."/>
            <person name="Yang L."/>
            <person name="Liu J."/>
            <person name="Lin J."/>
            <person name="Ding M."/>
        </authorList>
    </citation>
    <scope>NUCLEOTIDE SEQUENCE [GENOMIC DNA]</scope>
</reference>
<reference key="2">
    <citation type="journal article" date="2001" name="Genome Res.">
        <title>The complete genome sequence of the lactic acid bacterium Lactococcus lactis ssp. lactis IL1403.</title>
        <authorList>
            <person name="Bolotin A."/>
            <person name="Wincker P."/>
            <person name="Mauger S."/>
            <person name="Jaillon O."/>
            <person name="Malarme K."/>
            <person name="Weissenbach J."/>
            <person name="Ehrlich S.D."/>
            <person name="Sorokin A."/>
        </authorList>
    </citation>
    <scope>NUCLEOTIDE SEQUENCE [LARGE SCALE GENOMIC DNA]</scope>
    <source>
        <strain>IL1403</strain>
    </source>
</reference>
<dbReference type="EC" id="3.4.14.11"/>
<dbReference type="EMBL" id="AF401518">
    <property type="protein sequence ID" value="AAK96441.1"/>
    <property type="molecule type" value="Genomic_DNA"/>
</dbReference>
<dbReference type="EMBL" id="AE005176">
    <property type="protein sequence ID" value="AAK06147.1"/>
    <property type="molecule type" value="Genomic_DNA"/>
</dbReference>
<dbReference type="PIR" id="A86881">
    <property type="entry name" value="A86881"/>
</dbReference>
<dbReference type="RefSeq" id="NP_268206.1">
    <property type="nucleotide sequence ID" value="NC_002662.1"/>
</dbReference>
<dbReference type="RefSeq" id="WP_004254450.1">
    <property type="nucleotide sequence ID" value="NC_002662.1"/>
</dbReference>
<dbReference type="SMR" id="Q9CE01"/>
<dbReference type="ESTHER" id="lacla-pepx">
    <property type="family name" value="Lactobacillus_peptidase"/>
</dbReference>
<dbReference type="MEROPS" id="S15.001"/>
<dbReference type="PaxDb" id="272623-L118079"/>
<dbReference type="EnsemblBacteria" id="AAK06147">
    <property type="protein sequence ID" value="AAK06147"/>
    <property type="gene ID" value="L118079"/>
</dbReference>
<dbReference type="KEGG" id="lla:L118079"/>
<dbReference type="PATRIC" id="fig|272623.7.peg.2206"/>
<dbReference type="eggNOG" id="COG2936">
    <property type="taxonomic scope" value="Bacteria"/>
</dbReference>
<dbReference type="HOGENOM" id="CLU_011800_0_0_9"/>
<dbReference type="OrthoDB" id="319764at2"/>
<dbReference type="Proteomes" id="UP000002196">
    <property type="component" value="Chromosome"/>
</dbReference>
<dbReference type="GO" id="GO:0005737">
    <property type="term" value="C:cytoplasm"/>
    <property type="evidence" value="ECO:0007669"/>
    <property type="project" value="UniProtKB-SubCell"/>
</dbReference>
<dbReference type="GO" id="GO:0004177">
    <property type="term" value="F:aminopeptidase activity"/>
    <property type="evidence" value="ECO:0007669"/>
    <property type="project" value="UniProtKB-KW"/>
</dbReference>
<dbReference type="GO" id="GO:0008239">
    <property type="term" value="F:dipeptidyl-peptidase activity"/>
    <property type="evidence" value="ECO:0007669"/>
    <property type="project" value="UniProtKB-UniRule"/>
</dbReference>
<dbReference type="GO" id="GO:0008236">
    <property type="term" value="F:serine-type peptidase activity"/>
    <property type="evidence" value="ECO:0007669"/>
    <property type="project" value="UniProtKB-KW"/>
</dbReference>
<dbReference type="GO" id="GO:0006508">
    <property type="term" value="P:proteolysis"/>
    <property type="evidence" value="ECO:0007669"/>
    <property type="project" value="UniProtKB-KW"/>
</dbReference>
<dbReference type="Gene3D" id="1.10.246.70">
    <property type="match status" value="1"/>
</dbReference>
<dbReference type="Gene3D" id="3.40.50.1820">
    <property type="entry name" value="alpha/beta hydrolase"/>
    <property type="match status" value="1"/>
</dbReference>
<dbReference type="Gene3D" id="2.60.120.260">
    <property type="entry name" value="Galactose-binding domain-like"/>
    <property type="match status" value="1"/>
</dbReference>
<dbReference type="HAMAP" id="MF_00698">
    <property type="entry name" value="Aminopeptidase_S15"/>
    <property type="match status" value="1"/>
</dbReference>
<dbReference type="InterPro" id="IPR029058">
    <property type="entry name" value="AB_hydrolase_fold"/>
</dbReference>
<dbReference type="InterPro" id="IPR008979">
    <property type="entry name" value="Galactose-bd-like_sf"/>
</dbReference>
<dbReference type="InterPro" id="IPR008252">
    <property type="entry name" value="Pept_S15_Xpro"/>
</dbReference>
<dbReference type="InterPro" id="IPR015251">
    <property type="entry name" value="PepX_N_dom"/>
</dbReference>
<dbReference type="InterPro" id="IPR036313">
    <property type="entry name" value="PepX_N_dom_sf"/>
</dbReference>
<dbReference type="InterPro" id="IPR000383">
    <property type="entry name" value="Xaa-Pro-like_dom"/>
</dbReference>
<dbReference type="InterPro" id="IPR013736">
    <property type="entry name" value="Xaa-Pro_dipept_C"/>
</dbReference>
<dbReference type="InterPro" id="IPR050585">
    <property type="entry name" value="Xaa-Pro_dipeptidyl-ppase/CocE"/>
</dbReference>
<dbReference type="NCBIfam" id="NF003783">
    <property type="entry name" value="PRK05371.1-4"/>
    <property type="match status" value="1"/>
</dbReference>
<dbReference type="PANTHER" id="PTHR43056:SF10">
    <property type="entry name" value="COCE_NOND FAMILY, PUTATIVE (AFU_ORTHOLOGUE AFUA_7G00600)-RELATED"/>
    <property type="match status" value="1"/>
</dbReference>
<dbReference type="PANTHER" id="PTHR43056">
    <property type="entry name" value="PEPTIDASE S9 PROLYL OLIGOPEPTIDASE"/>
    <property type="match status" value="1"/>
</dbReference>
<dbReference type="Pfam" id="PF02129">
    <property type="entry name" value="Peptidase_S15"/>
    <property type="match status" value="1"/>
</dbReference>
<dbReference type="Pfam" id="PF08530">
    <property type="entry name" value="PepX_C"/>
    <property type="match status" value="1"/>
</dbReference>
<dbReference type="Pfam" id="PF09168">
    <property type="entry name" value="PepX_N"/>
    <property type="match status" value="1"/>
</dbReference>
<dbReference type="PRINTS" id="PR00923">
    <property type="entry name" value="LACTOPTASE"/>
</dbReference>
<dbReference type="SMART" id="SM00939">
    <property type="entry name" value="PepX_C"/>
    <property type="match status" value="1"/>
</dbReference>
<dbReference type="SMART" id="SM00940">
    <property type="entry name" value="PepX_N"/>
    <property type="match status" value="1"/>
</dbReference>
<dbReference type="SUPFAM" id="SSF53474">
    <property type="entry name" value="alpha/beta-Hydrolases"/>
    <property type="match status" value="1"/>
</dbReference>
<dbReference type="SUPFAM" id="SSF49785">
    <property type="entry name" value="Galactose-binding domain-like"/>
    <property type="match status" value="1"/>
</dbReference>
<dbReference type="SUPFAM" id="SSF81761">
    <property type="entry name" value="X-Prolyl dipeptidyl aminopeptidase PepX, N-terminal domain"/>
    <property type="match status" value="1"/>
</dbReference>
<name>PEPX_LACLA</name>
<proteinExistence type="inferred from homology"/>
<feature type="chain" id="PRO_0000220220" description="Xaa-Pro dipeptidyl-peptidase">
    <location>
        <begin position="1"/>
        <end position="763"/>
    </location>
</feature>
<feature type="active site" description="Charge relay system" evidence="1">
    <location>
        <position position="348"/>
    </location>
</feature>
<feature type="active site" description="Charge relay system" evidence="1">
    <location>
        <position position="468"/>
    </location>
</feature>
<feature type="active site" description="Charge relay system" evidence="1">
    <location>
        <position position="498"/>
    </location>
</feature>
<feature type="sequence conflict" description="In Ref. 1; AAK96441." evidence="2" ref="1">
    <original>T</original>
    <variation>A</variation>
    <location>
        <position position="78"/>
    </location>
</feature>
<feature type="sequence conflict" description="In Ref. 1; AAK96441." evidence="2" ref="1">
    <original>I</original>
    <variation>M</variation>
    <location>
        <position position="205"/>
    </location>
</feature>
<feature type="sequence conflict" description="In Ref. 1; AAK96441." evidence="2" ref="1">
    <original>D</original>
    <variation>A</variation>
    <location>
        <position position="420"/>
    </location>
</feature>
<feature type="sequence conflict" description="In Ref. 1; AAK96441." evidence="2" ref="1">
    <original>R</original>
    <variation>K</variation>
    <location>
        <position position="457"/>
    </location>
</feature>
<feature type="sequence conflict" description="In Ref. 1; AAK96441." evidence="2" ref="1">
    <original>L</original>
    <variation>I</variation>
    <location>
        <position position="637"/>
    </location>
</feature>
<feature type="sequence conflict" description="In Ref. 1; AAK96441." evidence="2" ref="1">
    <original>K</original>
    <variation>N</variation>
    <location>
        <position position="763"/>
    </location>
</feature>
<comment type="function">
    <text evidence="1">Removes N-terminal dipeptides sequentially from polypeptides having unsubstituted N-termini provided that the penultimate residue is proline.</text>
</comment>
<comment type="catalytic activity">
    <reaction>
        <text>Hydrolyzes Xaa-Pro-|- bonds to release unblocked, N-terminal dipeptides from substrates including Ala-Pro-|-p-nitroanilide and (sequentially) Tyr-Pro-|-Phe-Pro-|-Gly-Pro-|-Ile.</text>
        <dbReference type="EC" id="3.4.14.11"/>
    </reaction>
</comment>
<comment type="subunit">
    <text evidence="1">Homodimer.</text>
</comment>
<comment type="subcellular location">
    <subcellularLocation>
        <location evidence="1">Cytoplasm</location>
    </subcellularLocation>
</comment>
<comment type="similarity">
    <text evidence="2">Belongs to the peptidase S15 family.</text>
</comment>
<gene>
    <name type="primary">pepX</name>
    <name type="synonym">pepXP</name>
    <name type="ordered locus">LL2049</name>
    <name type="ORF">L118079</name>
</gene>
<sequence>MRFNHFSIVDKNFDEQLAELDQLGFRWSVFWDEKKILKDFLIQSPTDMTVLQANTELDVIEFLKSSIELDWEIFWNITLQLLDFVPNFDFEIGKATEFAKKLNLPQRDVEMTTETIISAFYYLLCSRRKSGMILVEHWVSEGLLPLDNHYHFFNDKSLATFDSSLLEREVVWVESPVDTEQKGKNDLIKIQIIRPKSTEKLPVVITASPYHLGINEKANDLALHEMNVDLEKKDSHKIHVQGKLPQKRPSETKELPIVDKAPYRFTHGWTYSLNDYFLTRGFASIYVAGVGTRGSNGFQTSGDYQQIYSMTAVIDWLNGRTRAYTSRKKTHEIKATWANGKVAMTGKSYLGTMAYGAATTGVDGLEVILAEAGISSWYNYYRENGLVRSPGGFPGEDLDVLAALTYSRNLDGADYLKGNDEYEKRLAEMTTALDRKSGDYNQFWHDRNYLINSDQVRADVLIVHGLQDWNVTPEQAYNFWQALPEGHAKHAFLHRGAHIYMNSWQSIDFSETINAYFSAKLLDRDLNLNLPPVILQENSKEQVWSAVSKFGGDDQLKLPLGKTAVSFAQFDNHYDDESFKKYSKDFNVFKKDLFENKANEAVIDLELPSELTINGPIELEIRLKLNDSKGLLSAQILDFGPKKRLEDKARVKDFKVLDRGRNFMLDDLVELPLVESPYQLVTKGFTNLQNKDLLTVSDLKADEWFTLKFELQPTIYHLEKADKLRVILYSTDFEHTVRDNRKVTYEIDLSQSKLIIPIESVKK</sequence>
<accession>Q9CE01</accession>
<accession>Q93D09</accession>
<organism>
    <name type="scientific">Lactococcus lactis subsp. lactis (strain IL1403)</name>
    <name type="common">Streptococcus lactis</name>
    <dbReference type="NCBI Taxonomy" id="272623"/>
    <lineage>
        <taxon>Bacteria</taxon>
        <taxon>Bacillati</taxon>
        <taxon>Bacillota</taxon>
        <taxon>Bacilli</taxon>
        <taxon>Lactobacillales</taxon>
        <taxon>Streptococcaceae</taxon>
        <taxon>Lactococcus</taxon>
    </lineage>
</organism>
<keyword id="KW-0031">Aminopeptidase</keyword>
<keyword id="KW-0963">Cytoplasm</keyword>
<keyword id="KW-0378">Hydrolase</keyword>
<keyword id="KW-0645">Protease</keyword>
<keyword id="KW-1185">Reference proteome</keyword>
<keyword id="KW-0720">Serine protease</keyword>